<gene>
    <name type="primary">gatA</name>
    <name type="ordered locus">CT_003</name>
</gene>
<protein>
    <recommendedName>
        <fullName>Glutamyl-tRNA(Gln) amidotransferase subunit A</fullName>
        <shortName>Glu-ADT subunit A</shortName>
        <ecNumber>6.3.5.7</ecNumber>
    </recommendedName>
</protein>
<feature type="chain" id="PRO_0000105153" description="Glutamyl-tRNA(Gln) amidotransferase subunit A">
    <location>
        <begin position="1"/>
        <end position="491"/>
    </location>
</feature>
<feature type="active site" description="Charge relay system" evidence="1">
    <location>
        <position position="77"/>
    </location>
</feature>
<feature type="active site" description="Charge relay system" evidence="1">
    <location>
        <position position="152"/>
    </location>
</feature>
<feature type="active site" description="Acyl-ester intermediate" evidence="1">
    <location>
        <position position="176"/>
    </location>
</feature>
<sequence length="491" mass="53588">MYRKSALELRDAVVNRELSVTAITEYFYHRIESHDEQIGAFLSLCKERALLRASRIDDKLAKGDPIGLLAGIPIGVKDNIHITGVKTTCASKMLENFVAPFDSTVVRRIEMEDGILLGKLNMDEFAMGSTTRYSAFHPTNNPWDLERVPGGSSGGSAAAVSARFCPIALGSDTGGSIRQPAAFCGVVGFKPSYGAVSRYGLVAFGSSLDQIGPLTTVVEDVALAMDAFAGRDPKDSTTRDFFKGTFSQALSLEVPKLIGVPRGFLDGLQEDCKENFFEALAVMEREGSRIIDVDLSVLKHAVPVYYIVASAEAATNLARFDGVRYGHRCAQADNMHEMYARSRKEGFGKEVTRRILLGNYVLSAERQNIFYKKGMAVRARLIDAFQAAFERCDVIAMPVCATPAIRDQDVLDPVSLYLQDVYTVAVNLAYLPAISVPSGLSKEGLPLGVQFIGERGSDQQICQVGYSFQEHSQIKQLYPKAVNGLFDGGIE</sequence>
<dbReference type="EC" id="6.3.5.7"/>
<dbReference type="EMBL" id="AE001273">
    <property type="protein sequence ID" value="AAC67593.1"/>
    <property type="molecule type" value="Genomic_DNA"/>
</dbReference>
<dbReference type="PIR" id="F71568">
    <property type="entry name" value="F71568"/>
</dbReference>
<dbReference type="RefSeq" id="NP_219505.1">
    <property type="nucleotide sequence ID" value="NC_000117.1"/>
</dbReference>
<dbReference type="RefSeq" id="WP_009871349.1">
    <property type="nucleotide sequence ID" value="NC_000117.1"/>
</dbReference>
<dbReference type="SMR" id="O84006"/>
<dbReference type="FunCoup" id="O84006">
    <property type="interactions" value="256"/>
</dbReference>
<dbReference type="STRING" id="272561.CT_003"/>
<dbReference type="EnsemblBacteria" id="AAC67593">
    <property type="protein sequence ID" value="AAC67593"/>
    <property type="gene ID" value="CT_003"/>
</dbReference>
<dbReference type="GeneID" id="884087"/>
<dbReference type="KEGG" id="ctr:CT_003"/>
<dbReference type="PATRIC" id="fig|272561.5.peg.4"/>
<dbReference type="HOGENOM" id="CLU_009600_0_3_0"/>
<dbReference type="InParanoid" id="O84006"/>
<dbReference type="OrthoDB" id="9811471at2"/>
<dbReference type="Proteomes" id="UP000000431">
    <property type="component" value="Chromosome"/>
</dbReference>
<dbReference type="GO" id="GO:0030956">
    <property type="term" value="C:glutamyl-tRNA(Gln) amidotransferase complex"/>
    <property type="evidence" value="ECO:0007669"/>
    <property type="project" value="InterPro"/>
</dbReference>
<dbReference type="GO" id="GO:0005524">
    <property type="term" value="F:ATP binding"/>
    <property type="evidence" value="ECO:0007669"/>
    <property type="project" value="UniProtKB-KW"/>
</dbReference>
<dbReference type="GO" id="GO:0050567">
    <property type="term" value="F:glutaminyl-tRNA synthase (glutamine-hydrolyzing) activity"/>
    <property type="evidence" value="ECO:0007669"/>
    <property type="project" value="UniProtKB-UniRule"/>
</dbReference>
<dbReference type="GO" id="GO:0006412">
    <property type="term" value="P:translation"/>
    <property type="evidence" value="ECO:0007669"/>
    <property type="project" value="UniProtKB-UniRule"/>
</dbReference>
<dbReference type="Gene3D" id="3.90.1300.10">
    <property type="entry name" value="Amidase signature (AS) domain"/>
    <property type="match status" value="1"/>
</dbReference>
<dbReference type="HAMAP" id="MF_00120">
    <property type="entry name" value="GatA"/>
    <property type="match status" value="1"/>
</dbReference>
<dbReference type="InterPro" id="IPR000120">
    <property type="entry name" value="Amidase"/>
</dbReference>
<dbReference type="InterPro" id="IPR020556">
    <property type="entry name" value="Amidase_CS"/>
</dbReference>
<dbReference type="InterPro" id="IPR023631">
    <property type="entry name" value="Amidase_dom"/>
</dbReference>
<dbReference type="InterPro" id="IPR036928">
    <property type="entry name" value="AS_sf"/>
</dbReference>
<dbReference type="InterPro" id="IPR004412">
    <property type="entry name" value="GatA"/>
</dbReference>
<dbReference type="NCBIfam" id="TIGR00132">
    <property type="entry name" value="gatA"/>
    <property type="match status" value="1"/>
</dbReference>
<dbReference type="PANTHER" id="PTHR11895:SF151">
    <property type="entry name" value="GLUTAMYL-TRNA(GLN) AMIDOTRANSFERASE SUBUNIT A"/>
    <property type="match status" value="1"/>
</dbReference>
<dbReference type="PANTHER" id="PTHR11895">
    <property type="entry name" value="TRANSAMIDASE"/>
    <property type="match status" value="1"/>
</dbReference>
<dbReference type="Pfam" id="PF01425">
    <property type="entry name" value="Amidase"/>
    <property type="match status" value="1"/>
</dbReference>
<dbReference type="SUPFAM" id="SSF75304">
    <property type="entry name" value="Amidase signature (AS) enzymes"/>
    <property type="match status" value="1"/>
</dbReference>
<dbReference type="PROSITE" id="PS00571">
    <property type="entry name" value="AMIDASES"/>
    <property type="match status" value="1"/>
</dbReference>
<comment type="function">
    <text evidence="1">Allows the formation of correctly charged Gln-tRNA(Gln) through the transamidation of misacylated Glu-tRNA(Gln) in organisms which lack glutaminyl-tRNA synthetase. The reaction takes place in the presence of glutamine and ATP through an activated gamma-phospho-Glu-tRNA(Gln) (By similarity).</text>
</comment>
<comment type="catalytic activity">
    <reaction>
        <text>L-glutamyl-tRNA(Gln) + L-glutamine + ATP + H2O = L-glutaminyl-tRNA(Gln) + L-glutamate + ADP + phosphate + H(+)</text>
        <dbReference type="Rhea" id="RHEA:17521"/>
        <dbReference type="Rhea" id="RHEA-COMP:9681"/>
        <dbReference type="Rhea" id="RHEA-COMP:9684"/>
        <dbReference type="ChEBI" id="CHEBI:15377"/>
        <dbReference type="ChEBI" id="CHEBI:15378"/>
        <dbReference type="ChEBI" id="CHEBI:29985"/>
        <dbReference type="ChEBI" id="CHEBI:30616"/>
        <dbReference type="ChEBI" id="CHEBI:43474"/>
        <dbReference type="ChEBI" id="CHEBI:58359"/>
        <dbReference type="ChEBI" id="CHEBI:78520"/>
        <dbReference type="ChEBI" id="CHEBI:78521"/>
        <dbReference type="ChEBI" id="CHEBI:456216"/>
        <dbReference type="EC" id="6.3.5.7"/>
    </reaction>
</comment>
<comment type="subunit">
    <text evidence="1">Heterotrimer of A, B and C subunits.</text>
</comment>
<comment type="similarity">
    <text evidence="2">Belongs to the amidase family. GatA subfamily.</text>
</comment>
<reference key="1">
    <citation type="journal article" date="1998" name="Science">
        <title>Genome sequence of an obligate intracellular pathogen of humans: Chlamydia trachomatis.</title>
        <authorList>
            <person name="Stephens R.S."/>
            <person name="Kalman S."/>
            <person name="Lammel C.J."/>
            <person name="Fan J."/>
            <person name="Marathe R."/>
            <person name="Aravind L."/>
            <person name="Mitchell W.P."/>
            <person name="Olinger L."/>
            <person name="Tatusov R.L."/>
            <person name="Zhao Q."/>
            <person name="Koonin E.V."/>
            <person name="Davis R.W."/>
        </authorList>
    </citation>
    <scope>NUCLEOTIDE SEQUENCE [LARGE SCALE GENOMIC DNA]</scope>
    <source>
        <strain>ATCC VR-885 / DSM 19411 / UW-3/Cx</strain>
    </source>
</reference>
<evidence type="ECO:0000250" key="1"/>
<evidence type="ECO:0000305" key="2"/>
<name>GATA_CHLTR</name>
<organism>
    <name type="scientific">Chlamydia trachomatis serovar D (strain ATCC VR-885 / DSM 19411 / UW-3/Cx)</name>
    <dbReference type="NCBI Taxonomy" id="272561"/>
    <lineage>
        <taxon>Bacteria</taxon>
        <taxon>Pseudomonadati</taxon>
        <taxon>Chlamydiota</taxon>
        <taxon>Chlamydiia</taxon>
        <taxon>Chlamydiales</taxon>
        <taxon>Chlamydiaceae</taxon>
        <taxon>Chlamydia/Chlamydophila group</taxon>
        <taxon>Chlamydia</taxon>
    </lineage>
</organism>
<keyword id="KW-0067">ATP-binding</keyword>
<keyword id="KW-0436">Ligase</keyword>
<keyword id="KW-0547">Nucleotide-binding</keyword>
<keyword id="KW-0648">Protein biosynthesis</keyword>
<keyword id="KW-1185">Reference proteome</keyword>
<accession>O84006</accession>
<proteinExistence type="inferred from homology"/>